<feature type="signal peptide" evidence="4">
    <location>
        <begin position="1"/>
        <end position="28"/>
    </location>
</feature>
<feature type="propeptide" id="PRO_0000033722" evidence="4">
    <location>
        <begin position="29"/>
        <end position="292"/>
    </location>
</feature>
<feature type="chain" id="PRO_0000033723" description="Inhibin beta B chain">
    <location>
        <begin position="293"/>
        <end position="407"/>
    </location>
</feature>
<feature type="region of interest" description="Disordered" evidence="5">
    <location>
        <begin position="26"/>
        <end position="62"/>
    </location>
</feature>
<feature type="compositionally biased region" description="Pro residues" evidence="5">
    <location>
        <begin position="30"/>
        <end position="47"/>
    </location>
</feature>
<feature type="glycosylation site" description="N-linked (GlcNAc...) asparagine" evidence="4">
    <location>
        <position position="93"/>
    </location>
</feature>
<feature type="disulfide bond" evidence="9">
    <location>
        <begin position="296"/>
        <end position="304"/>
    </location>
</feature>
<feature type="disulfide bond" evidence="9">
    <location>
        <begin position="303"/>
        <end position="372"/>
    </location>
</feature>
<feature type="disulfide bond" evidence="9">
    <location>
        <begin position="332"/>
        <end position="404"/>
    </location>
</feature>
<feature type="disulfide bond" evidence="9">
    <location>
        <begin position="336"/>
        <end position="406"/>
    </location>
</feature>
<feature type="disulfide bond" description="Interchain" evidence="9">
    <location>
        <position position="371"/>
    </location>
</feature>
<feature type="sequence conflict" description="In Ref. 4; AAH30029." evidence="10" ref="4">
    <original>P</original>
    <variation>Q</variation>
    <location>
        <position position="39"/>
    </location>
</feature>
<feature type="sequence conflict" description="In Ref. 5; AAA59170." evidence="10" ref="5">
    <original>S</original>
    <variation>A</variation>
    <location>
        <position position="47"/>
    </location>
</feature>
<feature type="sequence conflict" description="In Ref. 7; AA sequence." evidence="10" ref="7">
    <original>E</original>
    <variation>G</variation>
    <location>
        <position position="295"/>
    </location>
</feature>
<feature type="sequence conflict" description="In Ref. 4; AAH30029." evidence="10" ref="4">
    <original>G</original>
    <variation>S</variation>
    <location>
        <position position="326"/>
    </location>
</feature>
<feature type="strand" evidence="12">
    <location>
        <begin position="302"/>
        <end position="306"/>
    </location>
</feature>
<feature type="strand" evidence="12">
    <location>
        <begin position="309"/>
        <end position="311"/>
    </location>
</feature>
<feature type="turn" evidence="12">
    <location>
        <begin position="312"/>
        <end position="316"/>
    </location>
</feature>
<feature type="turn" evidence="12">
    <location>
        <begin position="318"/>
        <end position="320"/>
    </location>
</feature>
<feature type="strand" evidence="12">
    <location>
        <begin position="321"/>
        <end position="323"/>
    </location>
</feature>
<feature type="strand" evidence="12">
    <location>
        <begin position="325"/>
        <end position="328"/>
    </location>
</feature>
<feature type="strand" evidence="12">
    <location>
        <begin position="331"/>
        <end position="335"/>
    </location>
</feature>
<feature type="helix" evidence="12">
    <location>
        <begin position="347"/>
        <end position="360"/>
    </location>
</feature>
<feature type="strand" evidence="12">
    <location>
        <begin position="372"/>
        <end position="385"/>
    </location>
</feature>
<feature type="strand" evidence="12">
    <location>
        <begin position="391"/>
        <end position="406"/>
    </location>
</feature>
<evidence type="ECO:0000250" key="1">
    <source>
        <dbReference type="UniProtKB" id="P05111"/>
    </source>
</evidence>
<evidence type="ECO:0000250" key="2">
    <source>
        <dbReference type="UniProtKB" id="P17490"/>
    </source>
</evidence>
<evidence type="ECO:0000250" key="3">
    <source>
        <dbReference type="UniProtKB" id="Q04999"/>
    </source>
</evidence>
<evidence type="ECO:0000255" key="4"/>
<evidence type="ECO:0000256" key="5">
    <source>
        <dbReference type="SAM" id="MobiDB-lite"/>
    </source>
</evidence>
<evidence type="ECO:0000269" key="6">
    <source>
    </source>
</evidence>
<evidence type="ECO:0000269" key="7">
    <source>
    </source>
</evidence>
<evidence type="ECO:0000269" key="8">
    <source>
    </source>
</evidence>
<evidence type="ECO:0000269" key="9">
    <source>
    </source>
</evidence>
<evidence type="ECO:0000305" key="10"/>
<evidence type="ECO:0007744" key="11">
    <source>
        <dbReference type="PDB" id="7U5O"/>
    </source>
</evidence>
<evidence type="ECO:0007829" key="12">
    <source>
        <dbReference type="PDB" id="7U5O"/>
    </source>
</evidence>
<proteinExistence type="evidence at protein level"/>
<keyword id="KW-0002">3D-structure</keyword>
<keyword id="KW-0165">Cleavage on pair of basic residues</keyword>
<keyword id="KW-0903">Direct protein sequencing</keyword>
<keyword id="KW-1015">Disulfide bond</keyword>
<keyword id="KW-0325">Glycoprotein</keyword>
<keyword id="KW-0339">Growth factor</keyword>
<keyword id="KW-0372">Hormone</keyword>
<keyword id="KW-1267">Proteomics identification</keyword>
<keyword id="KW-1185">Reference proteome</keyword>
<keyword id="KW-0964">Secreted</keyword>
<keyword id="KW-0732">Signal</keyword>
<dbReference type="EMBL" id="M31669">
    <property type="protein sequence ID" value="AAA59451.1"/>
    <property type="molecule type" value="Genomic_DNA"/>
</dbReference>
<dbReference type="EMBL" id="M31668">
    <property type="protein sequence ID" value="AAA59451.1"/>
    <property type="status" value="JOINED"/>
    <property type="molecule type" value="Genomic_DNA"/>
</dbReference>
<dbReference type="EMBL" id="AC012363">
    <property type="protein sequence ID" value="AAY14801.1"/>
    <property type="molecule type" value="Genomic_DNA"/>
</dbReference>
<dbReference type="EMBL" id="CH471103">
    <property type="protein sequence ID" value="EAW95243.1"/>
    <property type="molecule type" value="Genomic_DNA"/>
</dbReference>
<dbReference type="EMBL" id="BC030029">
    <property type="protein sequence ID" value="AAH30029.1"/>
    <property type="molecule type" value="mRNA"/>
</dbReference>
<dbReference type="EMBL" id="M31682">
    <property type="protein sequence ID" value="AAA59170.1"/>
    <property type="molecule type" value="mRNA"/>
</dbReference>
<dbReference type="EMBL" id="M13437">
    <property type="protein sequence ID" value="AAA59169.1"/>
    <property type="molecule type" value="mRNA"/>
</dbReference>
<dbReference type="CCDS" id="CCDS2132.1"/>
<dbReference type="PIR" id="A40150">
    <property type="entry name" value="A40150"/>
</dbReference>
<dbReference type="RefSeq" id="NP_002184.2">
    <property type="nucleotide sequence ID" value="NM_002193.4"/>
</dbReference>
<dbReference type="PDB" id="7U5O">
    <property type="method" value="X-ray"/>
    <property type="resolution" value="3.45 A"/>
    <property type="chains" value="A/B/C=293-407"/>
</dbReference>
<dbReference type="PDBsum" id="7U5O"/>
<dbReference type="SMR" id="P09529"/>
<dbReference type="BioGRID" id="109837">
    <property type="interactions" value="12"/>
</dbReference>
<dbReference type="FunCoup" id="P09529">
    <property type="interactions" value="593"/>
</dbReference>
<dbReference type="IntAct" id="P09529">
    <property type="interactions" value="5"/>
</dbReference>
<dbReference type="STRING" id="9606.ENSP00000295228"/>
<dbReference type="GlyCosmos" id="P09529">
    <property type="glycosylation" value="3 sites, 1 glycan"/>
</dbReference>
<dbReference type="GlyGen" id="P09529">
    <property type="glycosylation" value="5 sites, 1 N-linked glycan (1 site), 1 O-linked glycan (2 sites)"/>
</dbReference>
<dbReference type="iPTMnet" id="P09529"/>
<dbReference type="PhosphoSitePlus" id="P09529"/>
<dbReference type="BioMuta" id="INHBB"/>
<dbReference type="DMDM" id="1708437"/>
<dbReference type="MassIVE" id="P09529"/>
<dbReference type="PaxDb" id="9606-ENSP00000295228"/>
<dbReference type="PeptideAtlas" id="P09529"/>
<dbReference type="ProteomicsDB" id="52243"/>
<dbReference type="TopDownProteomics" id="P09529"/>
<dbReference type="Antibodypedia" id="33396">
    <property type="antibodies" value="446 antibodies from 33 providers"/>
</dbReference>
<dbReference type="DNASU" id="3625"/>
<dbReference type="Ensembl" id="ENST00000295228.4">
    <property type="protein sequence ID" value="ENSP00000295228.3"/>
    <property type="gene ID" value="ENSG00000163083.6"/>
</dbReference>
<dbReference type="GeneID" id="3625"/>
<dbReference type="KEGG" id="hsa:3625"/>
<dbReference type="MANE-Select" id="ENST00000295228.4">
    <property type="protein sequence ID" value="ENSP00000295228.3"/>
    <property type="RefSeq nucleotide sequence ID" value="NM_002193.4"/>
    <property type="RefSeq protein sequence ID" value="NP_002184.2"/>
</dbReference>
<dbReference type="UCSC" id="uc002tmn.3">
    <property type="organism name" value="human"/>
</dbReference>
<dbReference type="AGR" id="HGNC:6067"/>
<dbReference type="CTD" id="3625"/>
<dbReference type="DisGeNET" id="3625"/>
<dbReference type="GeneCards" id="INHBB"/>
<dbReference type="HGNC" id="HGNC:6067">
    <property type="gene designation" value="INHBB"/>
</dbReference>
<dbReference type="HPA" id="ENSG00000163083">
    <property type="expression patterns" value="Tissue enhanced (adipose tissue, breast)"/>
</dbReference>
<dbReference type="MIM" id="147390">
    <property type="type" value="gene"/>
</dbReference>
<dbReference type="neXtProt" id="NX_P09529"/>
<dbReference type="OpenTargets" id="ENSG00000163083"/>
<dbReference type="PharmGKB" id="PA29878"/>
<dbReference type="VEuPathDB" id="HostDB:ENSG00000163083"/>
<dbReference type="eggNOG" id="KOG3900">
    <property type="taxonomic scope" value="Eukaryota"/>
</dbReference>
<dbReference type="GeneTree" id="ENSGT00940000159862"/>
<dbReference type="HOGENOM" id="CLU_020515_5_1_1"/>
<dbReference type="InParanoid" id="P09529"/>
<dbReference type="OMA" id="RMDGDFL"/>
<dbReference type="OrthoDB" id="6516235at2759"/>
<dbReference type="PAN-GO" id="P09529">
    <property type="GO annotations" value="4 GO annotations based on evolutionary models"/>
</dbReference>
<dbReference type="PhylomeDB" id="P09529"/>
<dbReference type="TreeFam" id="TF351791"/>
<dbReference type="PathwayCommons" id="P09529"/>
<dbReference type="Reactome" id="R-HSA-1502540">
    <property type="pathway name" value="Signaling by Activin"/>
</dbReference>
<dbReference type="Reactome" id="R-HSA-209822">
    <property type="pathway name" value="Glycoprotein hormones"/>
</dbReference>
<dbReference type="Reactome" id="R-HSA-2473224">
    <property type="pathway name" value="Antagonism of Activin by Follistatin"/>
</dbReference>
<dbReference type="SignaLink" id="P09529"/>
<dbReference type="BioGRID-ORCS" id="3625">
    <property type="hits" value="16 hits in 1148 CRISPR screens"/>
</dbReference>
<dbReference type="GeneWiki" id="INHBB"/>
<dbReference type="GenomeRNAi" id="3625"/>
<dbReference type="Pharos" id="P09529">
    <property type="development level" value="Tbio"/>
</dbReference>
<dbReference type="PRO" id="PR:P09529"/>
<dbReference type="Proteomes" id="UP000005640">
    <property type="component" value="Chromosome 2"/>
</dbReference>
<dbReference type="RNAct" id="P09529">
    <property type="molecule type" value="protein"/>
</dbReference>
<dbReference type="Bgee" id="ENSG00000163083">
    <property type="expression patterns" value="Expressed in endometrium epithelium and 131 other cell types or tissues"/>
</dbReference>
<dbReference type="GO" id="GO:0071944">
    <property type="term" value="C:cell periphery"/>
    <property type="evidence" value="ECO:0007669"/>
    <property type="project" value="Ensembl"/>
</dbReference>
<dbReference type="GO" id="GO:0005576">
    <property type="term" value="C:extracellular region"/>
    <property type="evidence" value="ECO:0000304"/>
    <property type="project" value="UniProtKB"/>
</dbReference>
<dbReference type="GO" id="GO:0005615">
    <property type="term" value="C:extracellular space"/>
    <property type="evidence" value="ECO:0000318"/>
    <property type="project" value="GO_Central"/>
</dbReference>
<dbReference type="GO" id="GO:0048471">
    <property type="term" value="C:perinuclear region of cytoplasm"/>
    <property type="evidence" value="ECO:0000314"/>
    <property type="project" value="UniProtKB"/>
</dbReference>
<dbReference type="GO" id="GO:0005125">
    <property type="term" value="F:cytokine activity"/>
    <property type="evidence" value="ECO:0000318"/>
    <property type="project" value="GO_Central"/>
</dbReference>
<dbReference type="GO" id="GO:0008083">
    <property type="term" value="F:growth factor activity"/>
    <property type="evidence" value="ECO:0007669"/>
    <property type="project" value="UniProtKB-KW"/>
</dbReference>
<dbReference type="GO" id="GO:0005179">
    <property type="term" value="F:hormone activity"/>
    <property type="evidence" value="ECO:0000304"/>
    <property type="project" value="UniProtKB"/>
</dbReference>
<dbReference type="GO" id="GO:0046789">
    <property type="term" value="F:host cell surface receptor binding"/>
    <property type="evidence" value="ECO:0000304"/>
    <property type="project" value="UniProtKB"/>
</dbReference>
<dbReference type="GO" id="GO:0042803">
    <property type="term" value="F:protein homodimerization activity"/>
    <property type="evidence" value="ECO:0000353"/>
    <property type="project" value="UniProtKB"/>
</dbReference>
<dbReference type="GO" id="GO:0032924">
    <property type="term" value="P:activin receptor signaling pathway"/>
    <property type="evidence" value="ECO:0000314"/>
    <property type="project" value="UniProtKB"/>
</dbReference>
<dbReference type="GO" id="GO:0097190">
    <property type="term" value="P:apoptotic signaling pathway"/>
    <property type="evidence" value="ECO:0007669"/>
    <property type="project" value="Ensembl"/>
</dbReference>
<dbReference type="GO" id="GO:0030154">
    <property type="term" value="P:cell differentiation"/>
    <property type="evidence" value="ECO:0000303"/>
    <property type="project" value="UniProtKB"/>
</dbReference>
<dbReference type="GO" id="GO:0071277">
    <property type="term" value="P:cellular response to calcium ion"/>
    <property type="evidence" value="ECO:0007669"/>
    <property type="project" value="Ensembl"/>
</dbReference>
<dbReference type="GO" id="GO:0071320">
    <property type="term" value="P:cellular response to cAMP"/>
    <property type="evidence" value="ECO:0007669"/>
    <property type="project" value="Ensembl"/>
</dbReference>
<dbReference type="GO" id="GO:0071397">
    <property type="term" value="P:cellular response to cholesterol"/>
    <property type="evidence" value="ECO:0007669"/>
    <property type="project" value="Ensembl"/>
</dbReference>
<dbReference type="GO" id="GO:0032869">
    <property type="term" value="P:cellular response to insulin stimulus"/>
    <property type="evidence" value="ECO:0000250"/>
    <property type="project" value="UniProtKB"/>
</dbReference>
<dbReference type="GO" id="GO:0071347">
    <property type="term" value="P:cellular response to interleukin-1"/>
    <property type="evidence" value="ECO:0007669"/>
    <property type="project" value="Ensembl"/>
</dbReference>
<dbReference type="GO" id="GO:0044320">
    <property type="term" value="P:cellular response to leptin stimulus"/>
    <property type="evidence" value="ECO:0007669"/>
    <property type="project" value="Ensembl"/>
</dbReference>
<dbReference type="GO" id="GO:0009267">
    <property type="term" value="P:cellular response to starvation"/>
    <property type="evidence" value="ECO:0000250"/>
    <property type="project" value="UniProtKB"/>
</dbReference>
<dbReference type="GO" id="GO:1904017">
    <property type="term" value="P:cellular response to Thyroglobulin triiodothyronine"/>
    <property type="evidence" value="ECO:0007669"/>
    <property type="project" value="Ensembl"/>
</dbReference>
<dbReference type="GO" id="GO:0097067">
    <property type="term" value="P:cellular response to thyroid hormone stimulus"/>
    <property type="evidence" value="ECO:0007669"/>
    <property type="project" value="Ensembl"/>
</dbReference>
<dbReference type="GO" id="GO:0006952">
    <property type="term" value="P:defense response"/>
    <property type="evidence" value="ECO:0000304"/>
    <property type="project" value="UniProtKB"/>
</dbReference>
<dbReference type="GO" id="GO:0045444">
    <property type="term" value="P:fat cell differentiation"/>
    <property type="evidence" value="ECO:0000250"/>
    <property type="project" value="UniProtKB"/>
</dbReference>
<dbReference type="GO" id="GO:0046882">
    <property type="term" value="P:negative regulation of follicle-stimulating hormone secretion"/>
    <property type="evidence" value="ECO:0000353"/>
    <property type="project" value="UniProtKB"/>
</dbReference>
<dbReference type="GO" id="GO:0032686">
    <property type="term" value="P:negative regulation of hepatocyte growth factor production"/>
    <property type="evidence" value="ECO:0000314"/>
    <property type="project" value="UniProtKB"/>
</dbReference>
<dbReference type="GO" id="GO:0046676">
    <property type="term" value="P:negative regulation of insulin secretion"/>
    <property type="evidence" value="ECO:0000250"/>
    <property type="project" value="UniProtKB"/>
</dbReference>
<dbReference type="GO" id="GO:0048599">
    <property type="term" value="P:oocyte development"/>
    <property type="evidence" value="ECO:0007669"/>
    <property type="project" value="Ensembl"/>
</dbReference>
<dbReference type="GO" id="GO:0001541">
    <property type="term" value="P:ovarian follicle development"/>
    <property type="evidence" value="ECO:0000303"/>
    <property type="project" value="UniProtKB"/>
</dbReference>
<dbReference type="GO" id="GO:0021983">
    <property type="term" value="P:pituitary gland development"/>
    <property type="evidence" value="ECO:0007669"/>
    <property type="project" value="Ensembl"/>
</dbReference>
<dbReference type="GO" id="GO:2001235">
    <property type="term" value="P:positive regulation of apoptotic signaling pathway"/>
    <property type="evidence" value="ECO:0007669"/>
    <property type="project" value="Ensembl"/>
</dbReference>
<dbReference type="GO" id="GO:0046881">
    <property type="term" value="P:positive regulation of follicle-stimulating hormone secretion"/>
    <property type="evidence" value="ECO:0000353"/>
    <property type="project" value="UniProtKB"/>
</dbReference>
<dbReference type="GO" id="GO:0060279">
    <property type="term" value="P:positive regulation of ovulation"/>
    <property type="evidence" value="ECO:0000250"/>
    <property type="project" value="UniProtKB"/>
</dbReference>
<dbReference type="GO" id="GO:0034698">
    <property type="term" value="P:response to gonadotropin"/>
    <property type="evidence" value="ECO:0007669"/>
    <property type="project" value="Ensembl"/>
</dbReference>
<dbReference type="GO" id="GO:0017085">
    <property type="term" value="P:response to insecticide"/>
    <property type="evidence" value="ECO:0007669"/>
    <property type="project" value="Ensembl"/>
</dbReference>
<dbReference type="GO" id="GO:0009611">
    <property type="term" value="P:response to wounding"/>
    <property type="evidence" value="ECO:0000270"/>
    <property type="project" value="UniProtKB"/>
</dbReference>
<dbReference type="GO" id="GO:0072520">
    <property type="term" value="P:seminiferous tubule development"/>
    <property type="evidence" value="ECO:0007669"/>
    <property type="project" value="Ensembl"/>
</dbReference>
<dbReference type="GO" id="GO:0007283">
    <property type="term" value="P:spermatogenesis"/>
    <property type="evidence" value="ECO:0007669"/>
    <property type="project" value="Ensembl"/>
</dbReference>
<dbReference type="CDD" id="cd19405">
    <property type="entry name" value="TGF_beta_INHBB"/>
    <property type="match status" value="1"/>
</dbReference>
<dbReference type="FunFam" id="2.10.90.10:FF:000005">
    <property type="entry name" value="Inhibin beta A chain"/>
    <property type="match status" value="1"/>
</dbReference>
<dbReference type="FunFam" id="2.60.120.970:FF:000012">
    <property type="entry name" value="inhibin beta B chain"/>
    <property type="match status" value="1"/>
</dbReference>
<dbReference type="Gene3D" id="2.60.120.970">
    <property type="match status" value="1"/>
</dbReference>
<dbReference type="Gene3D" id="2.10.90.10">
    <property type="entry name" value="Cystine-knot cytokines"/>
    <property type="match status" value="1"/>
</dbReference>
<dbReference type="InterPro" id="IPR029034">
    <property type="entry name" value="Cystine-knot_cytokine"/>
</dbReference>
<dbReference type="InterPro" id="IPR000381">
    <property type="entry name" value="INHBB_C"/>
</dbReference>
<dbReference type="InterPro" id="IPR001839">
    <property type="entry name" value="TGF-b_C"/>
</dbReference>
<dbReference type="InterPro" id="IPR001111">
    <property type="entry name" value="TGF-b_propeptide"/>
</dbReference>
<dbReference type="InterPro" id="IPR015615">
    <property type="entry name" value="TGF-beta-rel"/>
</dbReference>
<dbReference type="InterPro" id="IPR017948">
    <property type="entry name" value="TGFb_CS"/>
</dbReference>
<dbReference type="PANTHER" id="PTHR11848:SF29">
    <property type="entry name" value="INHIBIN BETA B CHAIN"/>
    <property type="match status" value="1"/>
</dbReference>
<dbReference type="PANTHER" id="PTHR11848">
    <property type="entry name" value="TGF-BETA FAMILY"/>
    <property type="match status" value="1"/>
</dbReference>
<dbReference type="Pfam" id="PF00019">
    <property type="entry name" value="TGF_beta"/>
    <property type="match status" value="1"/>
</dbReference>
<dbReference type="Pfam" id="PF00688">
    <property type="entry name" value="TGFb_propeptide"/>
    <property type="match status" value="1"/>
</dbReference>
<dbReference type="PRINTS" id="PR00671">
    <property type="entry name" value="INHIBINBB"/>
</dbReference>
<dbReference type="SMART" id="SM00204">
    <property type="entry name" value="TGFB"/>
    <property type="match status" value="1"/>
</dbReference>
<dbReference type="SUPFAM" id="SSF57501">
    <property type="entry name" value="Cystine-knot cytokines"/>
    <property type="match status" value="1"/>
</dbReference>
<dbReference type="PROSITE" id="PS00250">
    <property type="entry name" value="TGF_BETA_1"/>
    <property type="match status" value="1"/>
</dbReference>
<dbReference type="PROSITE" id="PS51362">
    <property type="entry name" value="TGF_BETA_2"/>
    <property type="match status" value="1"/>
</dbReference>
<comment type="function">
    <text>Inhibins and activins inhibit and activate, respectively, the secretion of follitropin by the pituitary gland. Inhibins/activins are involved in regulating a number of diverse functions such as hypothalamic and pituitary hormone secretion, gonadal hormone secretion, germ cell development and maturation, erythroid differentiation, insulin secretion, nerve cell survival, embryonic axial development or bone growth, depending on their subunit composition. Inhibins appear to oppose the functions of activins.</text>
</comment>
<comment type="function">
    <text evidence="3 7 8 9">Activin B is a dimer of alpha and beta-B that plays a role in several essential biological processes including embryonic development, stem cell maintenance and differentiation, haematopoiesis, cell proliferation and wound healing (PubMed:22611157, PubMed:15196700). Signals through type I receptor ACVR1C, abundantly expressed in pancreatic beta cells, and type II receptors like ACVR2A or BMPR2 (PubMed:35643319). Upon ligand binding, these receptors phosphorylate intracellular signaling mediators SMAD2 and SMAD3, which form a complex with SMAD4, translocate to the nucleus, and regulate gene expression (PubMed:15196700). Plays a crucial role in the induction of hepcidin by inflammation through activation of ACVR1C and subsequent phosphorylation of SMAD1/5/8 (PubMed:22611157). Regulates adipocyte lipid metabolism by decreasing non-esterified fatty acids and glycerol release and increases intracellular triglyceride content (By similarity). Stimulates wound healing by promoting cell migration and hair follicle regeneration through the JNK and ERK signaling pathways downstream of RHOA (By similarity).</text>
</comment>
<comment type="function">
    <text evidence="1 2">Inhibin B is a dimer of alpha and beta-B that plays a crucial role in the regulation of the reproductive system by inhibiting the secretion of follicle-stimulating hormone (FSH) from the anterior pituitary gland. Thereby, maintains reproductive homeostasis in both males and females. Acts as a more potent suppressor of FSH release than inhibin A (By similarity). Functions as competitive receptor antagonist binding activin type II receptors with high affinity in the presence of the TGF-beta type III coreceptor/TGFBR3L (By similarity).</text>
</comment>
<comment type="subunit">
    <text evidence="6 9">Dimeric, linked by one or more disulfide bonds. Inhibin B is a dimer of alpha and beta-B. Activin B is a homodimer of beta-B. Activin AB is a dimer of beta-A and beta-B. Interacts with FST and FSTL3. Activin B interacts with BMPR2 (PubMed:35643319).</text>
</comment>
<comment type="subcellular location">
    <subcellularLocation>
        <location>Secreted</location>
    </subcellularLocation>
</comment>
<comment type="similarity">
    <text evidence="10">Belongs to the TGF-beta family.</text>
</comment>
<comment type="online information" name="Wikipedia">
    <link uri="https://en.wikipedia.org/wiki/Inhibin"/>
    <text>Inhibin entry</text>
</comment>
<protein>
    <recommendedName>
        <fullName>Inhibin beta B chain</fullName>
    </recommendedName>
    <alternativeName>
        <fullName>Activin beta-B chain</fullName>
    </alternativeName>
</protein>
<accession>P09529</accession>
<accession>Q53T31</accession>
<accession>Q8N1D3</accession>
<name>INHBB_HUMAN</name>
<sequence length="407" mass="45122">MDGLPGRALGAACLLLLAAGWLGPEAWGSPTPPPTPAAPPPPPPPGSPGGSQDTCTSCGGFRRPEELGRVDGDFLEAVKRHILSRLQMRGRPNITHAVPKAAMVTALRKLHAGKVREDGRVEIPHLDGHASPGADGQERVSEIISFAETDGLASSRVRLYFFISNEGNQNLFVVQASLWLYLKLLPYVLEKGSRRKVRVKVYFQEQGHGDRWNMVEKRVDLKRSGWHTFPLTEAIQALFERGERRLNLDVQCDSCQELAVVPVFVDPGEESHRPFVVVQARLGDSRHRIRKRGLECDGRTNLCCRQQFFIDFRLIGWNDWIIAPTGYYGNYCEGSCPAYLAGVPGSASSFHTAVVNQYRMRGLNPGTVNSCCIPTKLSTMSMLYFDDEYNIVKRDVPNMIVEECGCA</sequence>
<organism>
    <name type="scientific">Homo sapiens</name>
    <name type="common">Human</name>
    <dbReference type="NCBI Taxonomy" id="9606"/>
    <lineage>
        <taxon>Eukaryota</taxon>
        <taxon>Metazoa</taxon>
        <taxon>Chordata</taxon>
        <taxon>Craniata</taxon>
        <taxon>Vertebrata</taxon>
        <taxon>Euteleostomi</taxon>
        <taxon>Mammalia</taxon>
        <taxon>Eutheria</taxon>
        <taxon>Euarchontoglires</taxon>
        <taxon>Primates</taxon>
        <taxon>Haplorrhini</taxon>
        <taxon>Catarrhini</taxon>
        <taxon>Hominidae</taxon>
        <taxon>Homo</taxon>
    </lineage>
</organism>
<reference key="1">
    <citation type="journal article" date="1989" name="Mol. Endocrinol.">
        <title>Activin B: precursor sequences, genomic structure and in vitro activities.</title>
        <authorList>
            <person name="Mason A.J."/>
            <person name="Berkemeier L.M."/>
            <person name="Schmelzer C.H."/>
            <person name="Schwall R.H."/>
        </authorList>
    </citation>
    <scope>NUCLEOTIDE SEQUENCE [GENOMIC DNA]</scope>
</reference>
<reference key="2">
    <citation type="journal article" date="2005" name="Nature">
        <title>Generation and annotation of the DNA sequences of human chromosomes 2 and 4.</title>
        <authorList>
            <person name="Hillier L.W."/>
            <person name="Graves T.A."/>
            <person name="Fulton R.S."/>
            <person name="Fulton L.A."/>
            <person name="Pepin K.H."/>
            <person name="Minx P."/>
            <person name="Wagner-McPherson C."/>
            <person name="Layman D."/>
            <person name="Wylie K."/>
            <person name="Sekhon M."/>
            <person name="Becker M.C."/>
            <person name="Fewell G.A."/>
            <person name="Delehaunty K.D."/>
            <person name="Miner T.L."/>
            <person name="Nash W.E."/>
            <person name="Kremitzki C."/>
            <person name="Oddy L."/>
            <person name="Du H."/>
            <person name="Sun H."/>
            <person name="Bradshaw-Cordum H."/>
            <person name="Ali J."/>
            <person name="Carter J."/>
            <person name="Cordes M."/>
            <person name="Harris A."/>
            <person name="Isak A."/>
            <person name="van Brunt A."/>
            <person name="Nguyen C."/>
            <person name="Du F."/>
            <person name="Courtney L."/>
            <person name="Kalicki J."/>
            <person name="Ozersky P."/>
            <person name="Abbott S."/>
            <person name="Armstrong J."/>
            <person name="Belter E.A."/>
            <person name="Caruso L."/>
            <person name="Cedroni M."/>
            <person name="Cotton M."/>
            <person name="Davidson T."/>
            <person name="Desai A."/>
            <person name="Elliott G."/>
            <person name="Erb T."/>
            <person name="Fronick C."/>
            <person name="Gaige T."/>
            <person name="Haakenson W."/>
            <person name="Haglund K."/>
            <person name="Holmes A."/>
            <person name="Harkins R."/>
            <person name="Kim K."/>
            <person name="Kruchowski S.S."/>
            <person name="Strong C.M."/>
            <person name="Grewal N."/>
            <person name="Goyea E."/>
            <person name="Hou S."/>
            <person name="Levy A."/>
            <person name="Martinka S."/>
            <person name="Mead K."/>
            <person name="McLellan M.D."/>
            <person name="Meyer R."/>
            <person name="Randall-Maher J."/>
            <person name="Tomlinson C."/>
            <person name="Dauphin-Kohlberg S."/>
            <person name="Kozlowicz-Reilly A."/>
            <person name="Shah N."/>
            <person name="Swearengen-Shahid S."/>
            <person name="Snider J."/>
            <person name="Strong J.T."/>
            <person name="Thompson J."/>
            <person name="Yoakum M."/>
            <person name="Leonard S."/>
            <person name="Pearman C."/>
            <person name="Trani L."/>
            <person name="Radionenko M."/>
            <person name="Waligorski J.E."/>
            <person name="Wang C."/>
            <person name="Rock S.M."/>
            <person name="Tin-Wollam A.-M."/>
            <person name="Maupin R."/>
            <person name="Latreille P."/>
            <person name="Wendl M.C."/>
            <person name="Yang S.-P."/>
            <person name="Pohl C."/>
            <person name="Wallis J.W."/>
            <person name="Spieth J."/>
            <person name="Bieri T.A."/>
            <person name="Berkowicz N."/>
            <person name="Nelson J.O."/>
            <person name="Osborne J."/>
            <person name="Ding L."/>
            <person name="Meyer R."/>
            <person name="Sabo A."/>
            <person name="Shotland Y."/>
            <person name="Sinha P."/>
            <person name="Wohldmann P.E."/>
            <person name="Cook L.L."/>
            <person name="Hickenbotham M.T."/>
            <person name="Eldred J."/>
            <person name="Williams D."/>
            <person name="Jones T.A."/>
            <person name="She X."/>
            <person name="Ciccarelli F.D."/>
            <person name="Izaurralde E."/>
            <person name="Taylor J."/>
            <person name="Schmutz J."/>
            <person name="Myers R.M."/>
            <person name="Cox D.R."/>
            <person name="Huang X."/>
            <person name="McPherson J.D."/>
            <person name="Mardis E.R."/>
            <person name="Clifton S.W."/>
            <person name="Warren W.C."/>
            <person name="Chinwalla A.T."/>
            <person name="Eddy S.R."/>
            <person name="Marra M.A."/>
            <person name="Ovcharenko I."/>
            <person name="Furey T.S."/>
            <person name="Miller W."/>
            <person name="Eichler E.E."/>
            <person name="Bork P."/>
            <person name="Suyama M."/>
            <person name="Torrents D."/>
            <person name="Waterston R.H."/>
            <person name="Wilson R.K."/>
        </authorList>
    </citation>
    <scope>NUCLEOTIDE SEQUENCE [LARGE SCALE GENOMIC DNA]</scope>
</reference>
<reference key="3">
    <citation type="submission" date="2005-07" db="EMBL/GenBank/DDBJ databases">
        <authorList>
            <person name="Mural R.J."/>
            <person name="Istrail S."/>
            <person name="Sutton G.G."/>
            <person name="Florea L."/>
            <person name="Halpern A.L."/>
            <person name="Mobarry C.M."/>
            <person name="Lippert R."/>
            <person name="Walenz B."/>
            <person name="Shatkay H."/>
            <person name="Dew I."/>
            <person name="Miller J.R."/>
            <person name="Flanigan M.J."/>
            <person name="Edwards N.J."/>
            <person name="Bolanos R."/>
            <person name="Fasulo D."/>
            <person name="Halldorsson B.V."/>
            <person name="Hannenhalli S."/>
            <person name="Turner R."/>
            <person name="Yooseph S."/>
            <person name="Lu F."/>
            <person name="Nusskern D.R."/>
            <person name="Shue B.C."/>
            <person name="Zheng X.H."/>
            <person name="Zhong F."/>
            <person name="Delcher A.L."/>
            <person name="Huson D.H."/>
            <person name="Kravitz S.A."/>
            <person name="Mouchard L."/>
            <person name="Reinert K."/>
            <person name="Remington K.A."/>
            <person name="Clark A.G."/>
            <person name="Waterman M.S."/>
            <person name="Eichler E.E."/>
            <person name="Adams M.D."/>
            <person name="Hunkapiller M.W."/>
            <person name="Myers E.W."/>
            <person name="Venter J.C."/>
        </authorList>
    </citation>
    <scope>NUCLEOTIDE SEQUENCE [LARGE SCALE GENOMIC DNA]</scope>
</reference>
<reference key="4">
    <citation type="journal article" date="2004" name="Genome Res.">
        <title>The status, quality, and expansion of the NIH full-length cDNA project: the Mammalian Gene Collection (MGC).</title>
        <authorList>
            <consortium name="The MGC Project Team"/>
        </authorList>
    </citation>
    <scope>NUCLEOTIDE SEQUENCE [LARGE SCALE MRNA]</scope>
    <source>
        <tissue>Brain</tissue>
    </source>
</reference>
<reference key="5">
    <citation type="journal article" date="1989" name="Mol. Endocrinol.">
        <title>Characterization and regulation of testicular inhibin beta-subunit mRNA.</title>
        <authorList>
            <person name="Feng Z.M."/>
            <person name="Bardin C.W."/>
            <person name="Chen C.L."/>
        </authorList>
    </citation>
    <scope>NUCLEOTIDE SEQUENCE [MRNA] OF 22-407</scope>
</reference>
<reference key="6">
    <citation type="journal article" date="1986" name="Biochem. Biophys. Res. Commun.">
        <title>Structure of two human ovarian inhibins.</title>
        <authorList>
            <person name="Mason A.J."/>
            <person name="Niall H.D."/>
            <person name="Seeburg P.H."/>
        </authorList>
    </citation>
    <scope>NUCLEOTIDE SEQUENCE [MRNA] OF 55-407</scope>
</reference>
<reference key="7">
    <citation type="journal article" date="1990" name="Biochim. Biophys. Acta">
        <title>Purification and characterization of recombinant human activin B.</title>
        <authorList>
            <person name="Schmelzer C.H."/>
            <person name="Burton L.E."/>
            <person name="Tamony C.M."/>
            <person name="Schwall R.H."/>
            <person name="Mason A.J."/>
            <person name="Liegeois N."/>
        </authorList>
    </citation>
    <scope>PROTEIN SEQUENCE OF 293-307</scope>
</reference>
<reference key="8">
    <citation type="journal article" date="2003" name="Endocrinology">
        <title>Differential binding and neutralization of activins A and B by follistatin and follistatin like-3 (FSTL-3/FSRP/FLRG).</title>
        <authorList>
            <person name="Schneyer A."/>
            <person name="Schoen A."/>
            <person name="Quigg A."/>
            <person name="Sidis Y."/>
        </authorList>
    </citation>
    <scope>INTERACTION WITH FST AND FSTL3</scope>
</reference>
<reference key="9">
    <citation type="journal article" date="2004" name="Mol. Cell. Endocrinol.">
        <title>Activin isoforms signal through type I receptor serine/threonine kinase ALK7.</title>
        <authorList>
            <person name="Tsuchida K."/>
            <person name="Nakatani M."/>
            <person name="Yamakawa N."/>
            <person name="Hashimoto O."/>
            <person name="Hasegawa Y."/>
            <person name="Sugino H."/>
        </authorList>
    </citation>
    <scope>FUNCTION</scope>
</reference>
<reference key="10">
    <citation type="journal article" date="2012" name="Blood">
        <title>Induction of activin B by inflammatory stimuli up-regulates expression of the iron-regulatory peptide hepcidin through Smad1/5/8 signaling.</title>
        <authorList>
            <person name="Besson-Fournier C."/>
            <person name="Latour C."/>
            <person name="Kautz L."/>
            <person name="Bertrand J."/>
            <person name="Ganz T."/>
            <person name="Roth M.P."/>
            <person name="Coppin H."/>
        </authorList>
    </citation>
    <scope>FUNCTION</scope>
</reference>
<reference evidence="11" key="11">
    <citation type="journal article" date="2022" name="J. Biol. Chem.">
        <title>Type II BMP and activin receptors BMPR2 and ACVR2A share a conserved mode of growth factor recognition.</title>
        <authorList>
            <person name="Chu K.Y."/>
            <person name="Malik A."/>
            <person name="Thamilselvan V."/>
            <person name="Martinez-Hackert E."/>
        </authorList>
    </citation>
    <scope>X-RAY CRYSTALLOGRAPHY (3.45 ANGSTROMS) OF 293-407</scope>
    <scope>DISULFIDE BONDS</scope>
    <scope>FUNCTION</scope>
    <scope>INTERACTION WITH BMPR2</scope>
</reference>
<gene>
    <name type="primary">INHBB</name>
</gene>